<protein>
    <recommendedName>
        <fullName evidence="1">Imidazole glycerol phosphate synthase subunit HisF</fullName>
        <ecNumber evidence="1">4.3.2.10</ecNumber>
    </recommendedName>
    <alternativeName>
        <fullName evidence="1">IGP synthase cyclase subunit</fullName>
    </alternativeName>
    <alternativeName>
        <fullName evidence="1">IGP synthase subunit HisF</fullName>
    </alternativeName>
    <alternativeName>
        <fullName evidence="1">ImGP synthase subunit HisF</fullName>
        <shortName evidence="1">IGPS subunit HisF</shortName>
    </alternativeName>
</protein>
<comment type="function">
    <text evidence="1">IGPS catalyzes the conversion of PRFAR and glutamine to IGP, AICAR and glutamate. The HisF subunit catalyzes the cyclization activity that produces IGP and AICAR from PRFAR using the ammonia provided by the HisH subunit.</text>
</comment>
<comment type="catalytic activity">
    <reaction evidence="1">
        <text>5-[(5-phospho-1-deoxy-D-ribulos-1-ylimino)methylamino]-1-(5-phospho-beta-D-ribosyl)imidazole-4-carboxamide + L-glutamine = D-erythro-1-(imidazol-4-yl)glycerol 3-phosphate + 5-amino-1-(5-phospho-beta-D-ribosyl)imidazole-4-carboxamide + L-glutamate + H(+)</text>
        <dbReference type="Rhea" id="RHEA:24793"/>
        <dbReference type="ChEBI" id="CHEBI:15378"/>
        <dbReference type="ChEBI" id="CHEBI:29985"/>
        <dbReference type="ChEBI" id="CHEBI:58278"/>
        <dbReference type="ChEBI" id="CHEBI:58359"/>
        <dbReference type="ChEBI" id="CHEBI:58475"/>
        <dbReference type="ChEBI" id="CHEBI:58525"/>
        <dbReference type="EC" id="4.3.2.10"/>
    </reaction>
</comment>
<comment type="pathway">
    <text evidence="1">Amino-acid biosynthesis; L-histidine biosynthesis; L-histidine from 5-phospho-alpha-D-ribose 1-diphosphate: step 5/9.</text>
</comment>
<comment type="subunit">
    <text evidence="1">Heterodimer of HisH and HisF.</text>
</comment>
<comment type="subcellular location">
    <subcellularLocation>
        <location evidence="1">Cytoplasm</location>
    </subcellularLocation>
</comment>
<comment type="similarity">
    <text evidence="1">Belongs to the HisA/HisF family.</text>
</comment>
<name>HIS6_DESHD</name>
<gene>
    <name evidence="1" type="primary">hisF</name>
    <name type="ordered locus">Dhaf_1497</name>
</gene>
<proteinExistence type="inferred from homology"/>
<accession>B8FP24</accession>
<sequence>MLAKRIIPCLDVHEGRVVKGTNFVNLRDAGDPVELAALYDREGADELVFLDISASAEGRETMVEVVRRTAEQVFIPFTIGGGLRRVEDIRKMLRAGADKVSLNTSAVQTPGLIEEGAHAFGSQCIVVAIDARQTRPGAWEVYIHGGRTPTGKDVLQWAEEVERLGAGEILLTSMNRDGTKNGYDLELTRAVSRAVSLPVIASGGVGTLEHLAEGLTIGEADAVLAASIFHYQEYSIGEAKAYLEERGIPVRKG</sequence>
<dbReference type="EC" id="4.3.2.10" evidence="1"/>
<dbReference type="EMBL" id="CP001336">
    <property type="protein sequence ID" value="ACL19549.1"/>
    <property type="molecule type" value="Genomic_DNA"/>
</dbReference>
<dbReference type="RefSeq" id="WP_005817210.1">
    <property type="nucleotide sequence ID" value="NC_011830.1"/>
</dbReference>
<dbReference type="SMR" id="B8FP24"/>
<dbReference type="KEGG" id="dhd:Dhaf_1497"/>
<dbReference type="HOGENOM" id="CLU_048577_4_0_9"/>
<dbReference type="UniPathway" id="UPA00031">
    <property type="reaction ID" value="UER00010"/>
</dbReference>
<dbReference type="Proteomes" id="UP000007726">
    <property type="component" value="Chromosome"/>
</dbReference>
<dbReference type="GO" id="GO:0005737">
    <property type="term" value="C:cytoplasm"/>
    <property type="evidence" value="ECO:0007669"/>
    <property type="project" value="UniProtKB-SubCell"/>
</dbReference>
<dbReference type="GO" id="GO:0000107">
    <property type="term" value="F:imidazoleglycerol-phosphate synthase activity"/>
    <property type="evidence" value="ECO:0007669"/>
    <property type="project" value="UniProtKB-UniRule"/>
</dbReference>
<dbReference type="GO" id="GO:0016829">
    <property type="term" value="F:lyase activity"/>
    <property type="evidence" value="ECO:0007669"/>
    <property type="project" value="UniProtKB-KW"/>
</dbReference>
<dbReference type="GO" id="GO:0000105">
    <property type="term" value="P:L-histidine biosynthetic process"/>
    <property type="evidence" value="ECO:0007669"/>
    <property type="project" value="UniProtKB-UniRule"/>
</dbReference>
<dbReference type="CDD" id="cd04731">
    <property type="entry name" value="HisF"/>
    <property type="match status" value="1"/>
</dbReference>
<dbReference type="FunFam" id="3.20.20.70:FF:000006">
    <property type="entry name" value="Imidazole glycerol phosphate synthase subunit HisF"/>
    <property type="match status" value="1"/>
</dbReference>
<dbReference type="Gene3D" id="3.20.20.70">
    <property type="entry name" value="Aldolase class I"/>
    <property type="match status" value="1"/>
</dbReference>
<dbReference type="HAMAP" id="MF_01013">
    <property type="entry name" value="HisF"/>
    <property type="match status" value="1"/>
</dbReference>
<dbReference type="InterPro" id="IPR013785">
    <property type="entry name" value="Aldolase_TIM"/>
</dbReference>
<dbReference type="InterPro" id="IPR006062">
    <property type="entry name" value="His_biosynth"/>
</dbReference>
<dbReference type="InterPro" id="IPR004651">
    <property type="entry name" value="HisF"/>
</dbReference>
<dbReference type="InterPro" id="IPR050064">
    <property type="entry name" value="IGPS_HisA/HisF"/>
</dbReference>
<dbReference type="InterPro" id="IPR011060">
    <property type="entry name" value="RibuloseP-bd_barrel"/>
</dbReference>
<dbReference type="NCBIfam" id="TIGR00735">
    <property type="entry name" value="hisF"/>
    <property type="match status" value="1"/>
</dbReference>
<dbReference type="PANTHER" id="PTHR21235:SF2">
    <property type="entry name" value="IMIDAZOLE GLYCEROL PHOSPHATE SYNTHASE HISHF"/>
    <property type="match status" value="1"/>
</dbReference>
<dbReference type="PANTHER" id="PTHR21235">
    <property type="entry name" value="IMIDAZOLE GLYCEROL PHOSPHATE SYNTHASE SUBUNIT HISF/H IGP SYNTHASE SUBUNIT HISF/H"/>
    <property type="match status" value="1"/>
</dbReference>
<dbReference type="Pfam" id="PF00977">
    <property type="entry name" value="His_biosynth"/>
    <property type="match status" value="1"/>
</dbReference>
<dbReference type="SUPFAM" id="SSF51366">
    <property type="entry name" value="Ribulose-phoshate binding barrel"/>
    <property type="match status" value="1"/>
</dbReference>
<feature type="chain" id="PRO_1000148917" description="Imidazole glycerol phosphate synthase subunit HisF">
    <location>
        <begin position="1"/>
        <end position="253"/>
    </location>
</feature>
<feature type="active site" evidence="1">
    <location>
        <position position="11"/>
    </location>
</feature>
<feature type="active site" evidence="1">
    <location>
        <position position="130"/>
    </location>
</feature>
<evidence type="ECO:0000255" key="1">
    <source>
        <dbReference type="HAMAP-Rule" id="MF_01013"/>
    </source>
</evidence>
<reference key="1">
    <citation type="journal article" date="2012" name="BMC Microbiol.">
        <title>Genome sequence of Desulfitobacterium hafniense DCB-2, a Gram-positive anaerobe capable of dehalogenation and metal reduction.</title>
        <authorList>
            <person name="Kim S.H."/>
            <person name="Harzman C."/>
            <person name="Davis J.K."/>
            <person name="Hutcheson R."/>
            <person name="Broderick J.B."/>
            <person name="Marsh T.L."/>
            <person name="Tiedje J.M."/>
        </authorList>
    </citation>
    <scope>NUCLEOTIDE SEQUENCE [LARGE SCALE GENOMIC DNA]</scope>
    <source>
        <strain>DSM 10664 / DCB-2</strain>
    </source>
</reference>
<organism>
    <name type="scientific">Desulfitobacterium hafniense (strain DSM 10664 / DCB-2)</name>
    <dbReference type="NCBI Taxonomy" id="272564"/>
    <lineage>
        <taxon>Bacteria</taxon>
        <taxon>Bacillati</taxon>
        <taxon>Bacillota</taxon>
        <taxon>Clostridia</taxon>
        <taxon>Eubacteriales</taxon>
        <taxon>Desulfitobacteriaceae</taxon>
        <taxon>Desulfitobacterium</taxon>
    </lineage>
</organism>
<keyword id="KW-0028">Amino-acid biosynthesis</keyword>
<keyword id="KW-0963">Cytoplasm</keyword>
<keyword id="KW-0368">Histidine biosynthesis</keyword>
<keyword id="KW-0456">Lyase</keyword>